<gene>
    <name type="ordered locus">ECU05_0110</name>
</gene>
<dbReference type="EMBL" id="AL590445">
    <property type="protein sequence ID" value="CAD26528.1"/>
    <property type="molecule type" value="Genomic_DNA"/>
</dbReference>
<dbReference type="RefSeq" id="NP_597351.1">
    <property type="nucleotide sequence ID" value="NM_001041217.1"/>
</dbReference>
<dbReference type="STRING" id="284813.Q8SVN5"/>
<dbReference type="GeneID" id="859015"/>
<dbReference type="KEGG" id="ecu:ECU05_0110"/>
<dbReference type="VEuPathDB" id="MicrosporidiaDB:ECU05_0110"/>
<dbReference type="HOGENOM" id="CLU_834266_0_0_1"/>
<dbReference type="InParanoid" id="Q8SVN5"/>
<dbReference type="OMA" id="PHAYHEF"/>
<dbReference type="OrthoDB" id="2193169at2759"/>
<dbReference type="Proteomes" id="UP000000819">
    <property type="component" value="Chromosome V"/>
</dbReference>
<comment type="developmental stage">
    <text evidence="2">Expressed in late sporogonial stages.</text>
</comment>
<keyword id="KW-0325">Glycoprotein</keyword>
<keyword id="KW-1185">Reference proteome</keyword>
<keyword id="KW-0732">Signal</keyword>
<proteinExistence type="evidence at protein level"/>
<accession>Q8SVN5</accession>
<evidence type="ECO:0000255" key="1"/>
<evidence type="ECO:0000269" key="2">
    <source>
    </source>
</evidence>
<organism>
    <name type="scientific">Encephalitozoon cuniculi (strain GB-M1)</name>
    <name type="common">Microsporidian parasite</name>
    <dbReference type="NCBI Taxonomy" id="284813"/>
    <lineage>
        <taxon>Eukaryota</taxon>
        <taxon>Fungi</taxon>
        <taxon>Fungi incertae sedis</taxon>
        <taxon>Microsporidia</taxon>
        <taxon>Unikaryonidae</taxon>
        <taxon>Encephalitozoon</taxon>
    </lineage>
</organism>
<feature type="signal peptide" evidence="1">
    <location>
        <begin position="1"/>
        <end position="16"/>
    </location>
</feature>
<feature type="chain" id="PRO_0000382769" description="Uncharacterized protein ECU05_0110">
    <location>
        <begin position="17"/>
        <end position="333"/>
    </location>
</feature>
<feature type="glycosylation site" description="N-linked (GlcNAc...) asparagine" evidence="1">
    <location>
        <position position="204"/>
    </location>
</feature>
<protein>
    <recommendedName>
        <fullName>Uncharacterized protein ECU05_0110</fullName>
    </recommendedName>
</protein>
<sequence>MRPFLMILSVTYIASAESPAKTHVRHHNRYHSHSPLKSNLRKTYNSPRLDKPLSDIGITDARRVPPVYISGNSSPLVADVGPDSGESGVVLAPSIDGSSEGNIGIYVSPSRDGQGIGSRERLISLHHLIHHAQGEALKASAISSAAKLEASALLAQRQELNAKIMANRAAMLQEEEQRLVAQRSSNPLILVKDTVPVANVANNNLSFEHHNELLNKKLDMIKKDQDEAIKRAENLARLHKARTQILPDSLVASDPKQFKDFVDGGPAQDLTFEVPVDPSIGNYYVSSDPGENLQTNKAPLTTGDLPYFIAHSNENGVFSPYGSLSNGESVAQA</sequence>
<name>Y511_ENCCU</name>
<reference key="1">
    <citation type="journal article" date="2001" name="Nature">
        <title>Genome sequence and gene compaction of the eukaryote parasite Encephalitozoon cuniculi.</title>
        <authorList>
            <person name="Katinka M.D."/>
            <person name="Duprat S."/>
            <person name="Cornillot E."/>
            <person name="Metenier G."/>
            <person name="Thomarat F."/>
            <person name="Prensier G."/>
            <person name="Barbe V."/>
            <person name="Peyretaillade E."/>
            <person name="Brottier P."/>
            <person name="Wincker P."/>
            <person name="Delbac F."/>
            <person name="El Alaoui H."/>
            <person name="Peyret P."/>
            <person name="Saurin W."/>
            <person name="Gouy M."/>
            <person name="Weissenbach J."/>
            <person name="Vivares C.P."/>
        </authorList>
    </citation>
    <scope>NUCLEOTIDE SEQUENCE [LARGE SCALE GENOMIC DNA]</scope>
    <source>
        <strain>GB-M1</strain>
    </source>
</reference>
<reference key="2">
    <citation type="journal article" date="2006" name="Proteomics">
        <title>Proteomic analysis of the eukaryotic parasite Encephalitozoon cuniculi (microsporidia): a reference map for proteins expressed in late sporogonial stages.</title>
        <authorList>
            <person name="Brosson D."/>
            <person name="Kuhn L."/>
            <person name="Delbac F."/>
            <person name="Garin J."/>
            <person name="Vivares C.P."/>
            <person name="Texier C."/>
        </authorList>
    </citation>
    <scope>IDENTIFICATION BY MASS SPECTROMETRY [LARGE SCALE ANALYSIS]</scope>
    <scope>DEVELOPMENTAL STAGE</scope>
</reference>